<reference key="1">
    <citation type="journal article" date="2006" name="Proc. Natl. Acad. Sci. U.S.A.">
        <title>The partitioned Rhizobium etli genome: genetic and metabolic redundancy in seven interacting replicons.</title>
        <authorList>
            <person name="Gonzalez V."/>
            <person name="Santamaria R.I."/>
            <person name="Bustos P."/>
            <person name="Hernandez-Gonzalez I."/>
            <person name="Medrano-Soto A."/>
            <person name="Moreno-Hagelsieb G."/>
            <person name="Janga S.C."/>
            <person name="Ramirez M.A."/>
            <person name="Jimenez-Jacinto V."/>
            <person name="Collado-Vides J."/>
            <person name="Davila G."/>
        </authorList>
    </citation>
    <scope>NUCLEOTIDE SEQUENCE [LARGE SCALE GENOMIC DNA]</scope>
    <source>
        <strain>ATCC 51251 / DSM 11541 / JCM 21823 / NBRC 15573 / CFN 42</strain>
    </source>
</reference>
<keyword id="KW-1003">Cell membrane</keyword>
<keyword id="KW-0210">Decarboxylase</keyword>
<keyword id="KW-0444">Lipid biosynthesis</keyword>
<keyword id="KW-0443">Lipid metabolism</keyword>
<keyword id="KW-0456">Lyase</keyword>
<keyword id="KW-0472">Membrane</keyword>
<keyword id="KW-0594">Phospholipid biosynthesis</keyword>
<keyword id="KW-1208">Phospholipid metabolism</keyword>
<keyword id="KW-0670">Pyruvate</keyword>
<keyword id="KW-1185">Reference proteome</keyword>
<keyword id="KW-0865">Zymogen</keyword>
<dbReference type="EC" id="4.1.1.65" evidence="1"/>
<dbReference type="EMBL" id="CP000133">
    <property type="protein sequence ID" value="ABC90214.1"/>
    <property type="molecule type" value="Genomic_DNA"/>
</dbReference>
<dbReference type="RefSeq" id="WP_011424746.1">
    <property type="nucleotide sequence ID" value="NC_007761.1"/>
</dbReference>
<dbReference type="KEGG" id="ret:RHE_CH01411"/>
<dbReference type="eggNOG" id="COG0688">
    <property type="taxonomic scope" value="Bacteria"/>
</dbReference>
<dbReference type="HOGENOM" id="CLU_072492_0_0_5"/>
<dbReference type="OrthoDB" id="9790893at2"/>
<dbReference type="UniPathway" id="UPA00558">
    <property type="reaction ID" value="UER00616"/>
</dbReference>
<dbReference type="Proteomes" id="UP000001936">
    <property type="component" value="Chromosome"/>
</dbReference>
<dbReference type="GO" id="GO:0005886">
    <property type="term" value="C:plasma membrane"/>
    <property type="evidence" value="ECO:0007669"/>
    <property type="project" value="UniProtKB-SubCell"/>
</dbReference>
<dbReference type="GO" id="GO:0004609">
    <property type="term" value="F:phosphatidylserine decarboxylase activity"/>
    <property type="evidence" value="ECO:0007669"/>
    <property type="project" value="UniProtKB-UniRule"/>
</dbReference>
<dbReference type="GO" id="GO:0006646">
    <property type="term" value="P:phosphatidylethanolamine biosynthetic process"/>
    <property type="evidence" value="ECO:0007669"/>
    <property type="project" value="UniProtKB-UniRule"/>
</dbReference>
<dbReference type="HAMAP" id="MF_00664">
    <property type="entry name" value="PS_decarb_PSD_A"/>
    <property type="match status" value="1"/>
</dbReference>
<dbReference type="InterPro" id="IPR003817">
    <property type="entry name" value="PS_Dcarbxylase"/>
</dbReference>
<dbReference type="InterPro" id="IPR033175">
    <property type="entry name" value="PSD-A"/>
</dbReference>
<dbReference type="NCBIfam" id="NF003677">
    <property type="entry name" value="PRK05305.1-1"/>
    <property type="match status" value="1"/>
</dbReference>
<dbReference type="NCBIfam" id="NF003678">
    <property type="entry name" value="PRK05305.1-2"/>
    <property type="match status" value="1"/>
</dbReference>
<dbReference type="NCBIfam" id="NF003679">
    <property type="entry name" value="PRK05305.1-3"/>
    <property type="match status" value="1"/>
</dbReference>
<dbReference type="NCBIfam" id="NF003685">
    <property type="entry name" value="PRK05305.2-5"/>
    <property type="match status" value="1"/>
</dbReference>
<dbReference type="PANTHER" id="PTHR35809">
    <property type="entry name" value="ARCHAETIDYLSERINE DECARBOXYLASE PROENZYME-RELATED"/>
    <property type="match status" value="1"/>
</dbReference>
<dbReference type="PANTHER" id="PTHR35809:SF1">
    <property type="entry name" value="ARCHAETIDYLSERINE DECARBOXYLASE PROENZYME-RELATED"/>
    <property type="match status" value="1"/>
</dbReference>
<dbReference type="Pfam" id="PF02666">
    <property type="entry name" value="PS_Dcarbxylase"/>
    <property type="match status" value="1"/>
</dbReference>
<organism>
    <name type="scientific">Rhizobium etli (strain ATCC 51251 / DSM 11541 / JCM 21823 / NBRC 15573 / CFN 42)</name>
    <dbReference type="NCBI Taxonomy" id="347834"/>
    <lineage>
        <taxon>Bacteria</taxon>
        <taxon>Pseudomonadati</taxon>
        <taxon>Pseudomonadota</taxon>
        <taxon>Alphaproteobacteria</taxon>
        <taxon>Hyphomicrobiales</taxon>
        <taxon>Rhizobiaceae</taxon>
        <taxon>Rhizobium/Agrobacterium group</taxon>
        <taxon>Rhizobium</taxon>
    </lineage>
</organism>
<protein>
    <recommendedName>
        <fullName evidence="1">Phosphatidylserine decarboxylase proenzyme</fullName>
        <ecNumber evidence="1">4.1.1.65</ecNumber>
    </recommendedName>
    <component>
        <recommendedName>
            <fullName evidence="1">Phosphatidylserine decarboxylase alpha chain</fullName>
        </recommendedName>
    </component>
    <component>
        <recommendedName>
            <fullName evidence="1">Phosphatidylserine decarboxylase beta chain</fullName>
        </recommendedName>
    </component>
</protein>
<gene>
    <name evidence="1" type="primary">psd</name>
    <name type="ordered locus">RHE_CH01411</name>
</gene>
<feature type="chain" id="PRO_0000262249" description="Phosphatidylserine decarboxylase beta chain" evidence="1">
    <location>
        <begin position="1"/>
        <end position="189"/>
    </location>
</feature>
<feature type="chain" id="PRO_0000262250" description="Phosphatidylserine decarboxylase alpha chain" evidence="1">
    <location>
        <begin position="190"/>
        <end position="232"/>
    </location>
</feature>
<feature type="active site" description="Schiff-base intermediate with substrate; via pyruvic acid" evidence="1">
    <location>
        <position position="190"/>
    </location>
</feature>
<feature type="site" description="Cleavage (non-hydrolytic); by autocatalysis" evidence="1">
    <location>
        <begin position="189"/>
        <end position="190"/>
    </location>
</feature>
<feature type="modified residue" description="Pyruvic acid (Ser); by autocatalysis" evidence="1">
    <location>
        <position position="190"/>
    </location>
</feature>
<proteinExistence type="inferred from homology"/>
<name>PSD_RHIEC</name>
<sequence length="232" mass="25552">MSLFNTVRNTIVPVHKEGYPFVAAFFVASLVLGWIFKPLFWIGMIFTLWCAYFFRDPERVTPQDDDLVISPADGKVSAIQMVTPPAELDLGSEPMLRISVFMNVFNCHVNRAPMRGRIVSINYRSGSFVNAELDKASEDNERNGLVIETRHGQIGVVQIAGLVARRILCWANTNEPLDAGERFGLIRFGSRLDVFLPAGAAPRVSLGQTAIAGETVIAEFASAKGPVISRHS</sequence>
<accession>Q2KAC2</accession>
<evidence type="ECO:0000255" key="1">
    <source>
        <dbReference type="HAMAP-Rule" id="MF_00664"/>
    </source>
</evidence>
<comment type="function">
    <text evidence="1">Catalyzes the formation of phosphatidylethanolamine (PtdEtn) from phosphatidylserine (PtdSer).</text>
</comment>
<comment type="catalytic activity">
    <reaction evidence="1">
        <text>a 1,2-diacyl-sn-glycero-3-phospho-L-serine + H(+) = a 1,2-diacyl-sn-glycero-3-phosphoethanolamine + CO2</text>
        <dbReference type="Rhea" id="RHEA:20828"/>
        <dbReference type="ChEBI" id="CHEBI:15378"/>
        <dbReference type="ChEBI" id="CHEBI:16526"/>
        <dbReference type="ChEBI" id="CHEBI:57262"/>
        <dbReference type="ChEBI" id="CHEBI:64612"/>
        <dbReference type="EC" id="4.1.1.65"/>
    </reaction>
</comment>
<comment type="cofactor">
    <cofactor evidence="1">
        <name>pyruvate</name>
        <dbReference type="ChEBI" id="CHEBI:15361"/>
    </cofactor>
    <text evidence="1">Binds 1 pyruvoyl group covalently per subunit.</text>
</comment>
<comment type="pathway">
    <text evidence="1">Phospholipid metabolism; phosphatidylethanolamine biosynthesis; phosphatidylethanolamine from CDP-diacylglycerol: step 2/2.</text>
</comment>
<comment type="subunit">
    <text evidence="1">Heterodimer of a large membrane-associated beta subunit and a small pyruvoyl-containing alpha subunit.</text>
</comment>
<comment type="subcellular location">
    <subcellularLocation>
        <location evidence="1">Cell membrane</location>
        <topology evidence="1">Peripheral membrane protein</topology>
    </subcellularLocation>
</comment>
<comment type="PTM">
    <text evidence="1">Is synthesized initially as an inactive proenzyme. Formation of the active enzyme involves a self-maturation process in which the active site pyruvoyl group is generated from an internal serine residue via an autocatalytic post-translational modification. Two non-identical subunits are generated from the proenzyme in this reaction, and the pyruvate is formed at the N-terminus of the alpha chain, which is derived from the carboxyl end of the proenzyme. The post-translation cleavage follows an unusual pathway, termed non-hydrolytic serinolysis, in which the side chain hydroxyl group of the serine supplies its oxygen atom to form the C-terminus of the beta chain, while the remainder of the serine residue undergoes an oxidative deamination to produce ammonia and the pyruvoyl prosthetic group on the alpha chain.</text>
</comment>
<comment type="similarity">
    <text evidence="1">Belongs to the phosphatidylserine decarboxylase family. PSD-A subfamily.</text>
</comment>